<feature type="chain" id="PRO_0000076876" description="3-isopropylmalate dehydratase large subunit">
    <location>
        <begin position="1"/>
        <end position="413"/>
    </location>
</feature>
<feature type="binding site" evidence="1">
    <location>
        <position position="293"/>
    </location>
    <ligand>
        <name>[4Fe-4S] cluster</name>
        <dbReference type="ChEBI" id="CHEBI:49883"/>
    </ligand>
</feature>
<feature type="binding site" evidence="1">
    <location>
        <position position="353"/>
    </location>
    <ligand>
        <name>[4Fe-4S] cluster</name>
        <dbReference type="ChEBI" id="CHEBI:49883"/>
    </ligand>
</feature>
<feature type="binding site" evidence="1">
    <location>
        <position position="356"/>
    </location>
    <ligand>
        <name>[4Fe-4S] cluster</name>
        <dbReference type="ChEBI" id="CHEBI:49883"/>
    </ligand>
</feature>
<accession>Q6L0K5</accession>
<reference key="1">
    <citation type="journal article" date="2004" name="Proc. Natl. Acad. Sci. U.S.A.">
        <title>Genome sequence of Picrophilus torridus and its implications for life around pH 0.</title>
        <authorList>
            <person name="Fuetterer O."/>
            <person name="Angelov A."/>
            <person name="Liesegang H."/>
            <person name="Gottschalk G."/>
            <person name="Schleper C."/>
            <person name="Schepers B."/>
            <person name="Dock C."/>
            <person name="Antranikian G."/>
            <person name="Liebl W."/>
        </authorList>
    </citation>
    <scope>NUCLEOTIDE SEQUENCE [LARGE SCALE GENOMIC DNA]</scope>
    <source>
        <strain>ATCC 700027 / DSM 9790 / JCM 10055 / NBRC 100828 / KAW 2/3</strain>
    </source>
</reference>
<sequence>MKTAVEKIFSDKSGNDARAGDYVIANLDYVMVNDITGPIAIDAFNELGYKPLSDRIVVIPDHFVPPKDINSAIQYKKVKDFALKHNTHFYDLGRGGVCHQVMMEKGFAAPGRLIAGADSHTNTYGALSCVSVGIGSTEAGVIFGTGRMWFKVPETDLIRINGRPKKGVYGKDIILNVLSRIGNGGSAYKCMEFTGSTIDYLDINERMTMANMTTEAGAKCSFFNADEKTLDYIRNKTNDYKIYKDDENAEYSRIIDIDASEIEPSVAIPNSPDNVRPVSKVSERIDQAYIGSCTNGRIEDIRRAALILKDKKIDKNVRLMVVPASQEVYNQALKEGLVDIITDAGGYFAGTTCGACLGGYMGVLGPGETCISTTNRNFIGRMGDRTSRVYLANPEVVAASAIMGRIASPEEIQ</sequence>
<evidence type="ECO:0000255" key="1">
    <source>
        <dbReference type="HAMAP-Rule" id="MF_01027"/>
    </source>
</evidence>
<comment type="function">
    <text evidence="1">Catalyzes the isomerization between 2-isopropylmalate and 3-isopropylmalate, via the formation of 2-isopropylmaleate.</text>
</comment>
<comment type="catalytic activity">
    <reaction evidence="1">
        <text>(2R,3S)-3-isopropylmalate = (2S)-2-isopropylmalate</text>
        <dbReference type="Rhea" id="RHEA:32287"/>
        <dbReference type="ChEBI" id="CHEBI:1178"/>
        <dbReference type="ChEBI" id="CHEBI:35121"/>
        <dbReference type="EC" id="4.2.1.33"/>
    </reaction>
</comment>
<comment type="cofactor">
    <cofactor evidence="1">
        <name>[4Fe-4S] cluster</name>
        <dbReference type="ChEBI" id="CHEBI:49883"/>
    </cofactor>
    <text evidence="1">Binds 1 [4Fe-4S] cluster per subunit.</text>
</comment>
<comment type="pathway">
    <text evidence="1">Amino-acid biosynthesis; L-leucine biosynthesis; L-leucine from 3-methyl-2-oxobutanoate: step 2/4.</text>
</comment>
<comment type="subunit">
    <text evidence="1">Heterodimer of LeuC and LeuD.</text>
</comment>
<comment type="similarity">
    <text evidence="1">Belongs to the aconitase/IPM isomerase family. LeuC type 2 subfamily.</text>
</comment>
<protein>
    <recommendedName>
        <fullName evidence="1">3-isopropylmalate dehydratase large subunit</fullName>
        <ecNumber evidence="1">4.2.1.33</ecNumber>
    </recommendedName>
    <alternativeName>
        <fullName evidence="1">Alpha-IPM isomerase</fullName>
        <shortName evidence="1">IPMI</shortName>
    </alternativeName>
    <alternativeName>
        <fullName evidence="1">Isopropylmalate isomerase</fullName>
    </alternativeName>
</protein>
<keyword id="KW-0004">4Fe-4S</keyword>
<keyword id="KW-0028">Amino-acid biosynthesis</keyword>
<keyword id="KW-0100">Branched-chain amino acid biosynthesis</keyword>
<keyword id="KW-0408">Iron</keyword>
<keyword id="KW-0411">Iron-sulfur</keyword>
<keyword id="KW-0432">Leucine biosynthesis</keyword>
<keyword id="KW-0456">Lyase</keyword>
<keyword id="KW-0479">Metal-binding</keyword>
<gene>
    <name evidence="1" type="primary">leuC</name>
    <name type="ordered locus">PTO0912</name>
</gene>
<dbReference type="EC" id="4.2.1.33" evidence="1"/>
<dbReference type="EMBL" id="AE017261">
    <property type="protein sequence ID" value="AAT43497.1"/>
    <property type="molecule type" value="Genomic_DNA"/>
</dbReference>
<dbReference type="RefSeq" id="WP_011177713.1">
    <property type="nucleotide sequence ID" value="NC_005877.1"/>
</dbReference>
<dbReference type="SMR" id="Q6L0K5"/>
<dbReference type="FunCoup" id="Q6L0K5">
    <property type="interactions" value="169"/>
</dbReference>
<dbReference type="STRING" id="263820.PTO0912"/>
<dbReference type="PaxDb" id="263820-PTO0912"/>
<dbReference type="GeneID" id="2844520"/>
<dbReference type="KEGG" id="pto:PTO0912"/>
<dbReference type="PATRIC" id="fig|263820.9.peg.950"/>
<dbReference type="eggNOG" id="arCOG01698">
    <property type="taxonomic scope" value="Archaea"/>
</dbReference>
<dbReference type="HOGENOM" id="CLU_006714_3_4_2"/>
<dbReference type="InParanoid" id="Q6L0K5"/>
<dbReference type="OrthoDB" id="255at2157"/>
<dbReference type="UniPathway" id="UPA00048">
    <property type="reaction ID" value="UER00071"/>
</dbReference>
<dbReference type="Proteomes" id="UP000000438">
    <property type="component" value="Chromosome"/>
</dbReference>
<dbReference type="GO" id="GO:0003861">
    <property type="term" value="F:3-isopropylmalate dehydratase activity"/>
    <property type="evidence" value="ECO:0007669"/>
    <property type="project" value="UniProtKB-UniRule"/>
</dbReference>
<dbReference type="GO" id="GO:0051539">
    <property type="term" value="F:4 iron, 4 sulfur cluster binding"/>
    <property type="evidence" value="ECO:0007669"/>
    <property type="project" value="UniProtKB-KW"/>
</dbReference>
<dbReference type="GO" id="GO:0046872">
    <property type="term" value="F:metal ion binding"/>
    <property type="evidence" value="ECO:0007669"/>
    <property type="project" value="UniProtKB-KW"/>
</dbReference>
<dbReference type="GO" id="GO:0009098">
    <property type="term" value="P:L-leucine biosynthetic process"/>
    <property type="evidence" value="ECO:0007669"/>
    <property type="project" value="UniProtKB-UniRule"/>
</dbReference>
<dbReference type="CDD" id="cd01583">
    <property type="entry name" value="IPMI"/>
    <property type="match status" value="1"/>
</dbReference>
<dbReference type="Gene3D" id="3.30.499.10">
    <property type="entry name" value="Aconitase, domain 3"/>
    <property type="match status" value="2"/>
</dbReference>
<dbReference type="HAMAP" id="MF_01027">
    <property type="entry name" value="LeuC_type2"/>
    <property type="match status" value="1"/>
</dbReference>
<dbReference type="InterPro" id="IPR015931">
    <property type="entry name" value="Acnase/IPM_dHydase_lsu_aba_1/3"/>
</dbReference>
<dbReference type="InterPro" id="IPR001030">
    <property type="entry name" value="Acoase/IPM_deHydtase_lsu_aba"/>
</dbReference>
<dbReference type="InterPro" id="IPR018136">
    <property type="entry name" value="Aconitase_4Fe-4S_BS"/>
</dbReference>
<dbReference type="InterPro" id="IPR036008">
    <property type="entry name" value="Aconitase_4Fe-4S_dom"/>
</dbReference>
<dbReference type="InterPro" id="IPR011826">
    <property type="entry name" value="HAcnase/IPMdehydase_lsu_prok"/>
</dbReference>
<dbReference type="InterPro" id="IPR006251">
    <property type="entry name" value="Homoacnase/IPMdehydase_lsu"/>
</dbReference>
<dbReference type="InterPro" id="IPR050067">
    <property type="entry name" value="IPM_dehydratase_rel_enz"/>
</dbReference>
<dbReference type="InterPro" id="IPR033941">
    <property type="entry name" value="IPMI_cat"/>
</dbReference>
<dbReference type="NCBIfam" id="TIGR01343">
    <property type="entry name" value="hacA_fam"/>
    <property type="match status" value="1"/>
</dbReference>
<dbReference type="NCBIfam" id="TIGR02086">
    <property type="entry name" value="IPMI_arch"/>
    <property type="match status" value="1"/>
</dbReference>
<dbReference type="NCBIfam" id="NF001614">
    <property type="entry name" value="PRK00402.1"/>
    <property type="match status" value="1"/>
</dbReference>
<dbReference type="PANTHER" id="PTHR43822:SF2">
    <property type="entry name" value="HOMOACONITASE, MITOCHONDRIAL"/>
    <property type="match status" value="1"/>
</dbReference>
<dbReference type="PANTHER" id="PTHR43822">
    <property type="entry name" value="HOMOACONITASE, MITOCHONDRIAL-RELATED"/>
    <property type="match status" value="1"/>
</dbReference>
<dbReference type="Pfam" id="PF00330">
    <property type="entry name" value="Aconitase"/>
    <property type="match status" value="2"/>
</dbReference>
<dbReference type="PRINTS" id="PR00415">
    <property type="entry name" value="ACONITASE"/>
</dbReference>
<dbReference type="SUPFAM" id="SSF53732">
    <property type="entry name" value="Aconitase iron-sulfur domain"/>
    <property type="match status" value="1"/>
</dbReference>
<dbReference type="PROSITE" id="PS00450">
    <property type="entry name" value="ACONITASE_1"/>
    <property type="match status" value="1"/>
</dbReference>
<organism>
    <name type="scientific">Picrophilus torridus (strain ATCC 700027 / DSM 9790 / JCM 10055 / NBRC 100828 / KAW 2/3)</name>
    <dbReference type="NCBI Taxonomy" id="1122961"/>
    <lineage>
        <taxon>Archaea</taxon>
        <taxon>Methanobacteriati</taxon>
        <taxon>Thermoplasmatota</taxon>
        <taxon>Thermoplasmata</taxon>
        <taxon>Thermoplasmatales</taxon>
        <taxon>Picrophilaceae</taxon>
        <taxon>Picrophilus</taxon>
    </lineage>
</organism>
<proteinExistence type="inferred from homology"/>
<name>LEUC_PICTO</name>